<gene>
    <name evidence="1" type="primary">glmS</name>
    <name type="ordered locus">CCA_00788</name>
</gene>
<evidence type="ECO:0000255" key="1">
    <source>
        <dbReference type="HAMAP-Rule" id="MF_00164"/>
    </source>
</evidence>
<protein>
    <recommendedName>
        <fullName evidence="1">Glutamine--fructose-6-phosphate aminotransferase [isomerizing]</fullName>
        <ecNumber evidence="1">2.6.1.16</ecNumber>
    </recommendedName>
    <alternativeName>
        <fullName evidence="1">D-fructose-6-phosphate amidotransferase</fullName>
    </alternativeName>
    <alternativeName>
        <fullName evidence="1">GFAT</fullName>
    </alternativeName>
    <alternativeName>
        <fullName evidence="1">Glucosamine-6-phosphate synthase</fullName>
    </alternativeName>
    <alternativeName>
        <fullName evidence="1">Hexosephosphate aminotransferase</fullName>
    </alternativeName>
    <alternativeName>
        <fullName evidence="1">L-glutamine--D-fructose-6-phosphate amidotransferase</fullName>
    </alternativeName>
</protein>
<proteinExistence type="inferred from homology"/>
<organism>
    <name type="scientific">Chlamydia caviae (strain ATCC VR-813 / DSM 19441 / 03DC25 / GPIC)</name>
    <name type="common">Chlamydophila caviae</name>
    <dbReference type="NCBI Taxonomy" id="227941"/>
    <lineage>
        <taxon>Bacteria</taxon>
        <taxon>Pseudomonadati</taxon>
        <taxon>Chlamydiota</taxon>
        <taxon>Chlamydiia</taxon>
        <taxon>Chlamydiales</taxon>
        <taxon>Chlamydiaceae</taxon>
        <taxon>Chlamydia/Chlamydophila group</taxon>
        <taxon>Chlamydia</taxon>
    </lineage>
</organism>
<keyword id="KW-0032">Aminotransferase</keyword>
<keyword id="KW-0963">Cytoplasm</keyword>
<keyword id="KW-0315">Glutamine amidotransferase</keyword>
<keyword id="KW-0677">Repeat</keyword>
<keyword id="KW-0808">Transferase</keyword>
<dbReference type="EC" id="2.6.1.16" evidence="1"/>
<dbReference type="EMBL" id="AE015925">
    <property type="protein sequence ID" value="AAP05529.1"/>
    <property type="molecule type" value="Genomic_DNA"/>
</dbReference>
<dbReference type="RefSeq" id="WP_011006743.1">
    <property type="nucleotide sequence ID" value="NC_003361.3"/>
</dbReference>
<dbReference type="SMR" id="Q821Z7"/>
<dbReference type="STRING" id="227941.CCA_00788"/>
<dbReference type="KEGG" id="cca:CCA_00788"/>
<dbReference type="eggNOG" id="COG0449">
    <property type="taxonomic scope" value="Bacteria"/>
</dbReference>
<dbReference type="HOGENOM" id="CLU_012520_5_2_0"/>
<dbReference type="OrthoDB" id="106547at2"/>
<dbReference type="Proteomes" id="UP000002193">
    <property type="component" value="Chromosome"/>
</dbReference>
<dbReference type="GO" id="GO:0005829">
    <property type="term" value="C:cytosol"/>
    <property type="evidence" value="ECO:0007669"/>
    <property type="project" value="TreeGrafter"/>
</dbReference>
<dbReference type="GO" id="GO:0097367">
    <property type="term" value="F:carbohydrate derivative binding"/>
    <property type="evidence" value="ECO:0007669"/>
    <property type="project" value="InterPro"/>
</dbReference>
<dbReference type="GO" id="GO:0004360">
    <property type="term" value="F:glutamine-fructose-6-phosphate transaminase (isomerizing) activity"/>
    <property type="evidence" value="ECO:0007669"/>
    <property type="project" value="UniProtKB-UniRule"/>
</dbReference>
<dbReference type="GO" id="GO:0005975">
    <property type="term" value="P:carbohydrate metabolic process"/>
    <property type="evidence" value="ECO:0007669"/>
    <property type="project" value="UniProtKB-UniRule"/>
</dbReference>
<dbReference type="GO" id="GO:0006002">
    <property type="term" value="P:fructose 6-phosphate metabolic process"/>
    <property type="evidence" value="ECO:0007669"/>
    <property type="project" value="TreeGrafter"/>
</dbReference>
<dbReference type="GO" id="GO:0006487">
    <property type="term" value="P:protein N-linked glycosylation"/>
    <property type="evidence" value="ECO:0007669"/>
    <property type="project" value="TreeGrafter"/>
</dbReference>
<dbReference type="GO" id="GO:0006047">
    <property type="term" value="P:UDP-N-acetylglucosamine metabolic process"/>
    <property type="evidence" value="ECO:0007669"/>
    <property type="project" value="TreeGrafter"/>
</dbReference>
<dbReference type="CDD" id="cd00714">
    <property type="entry name" value="GFAT"/>
    <property type="match status" value="1"/>
</dbReference>
<dbReference type="CDD" id="cd05008">
    <property type="entry name" value="SIS_GlmS_GlmD_1"/>
    <property type="match status" value="1"/>
</dbReference>
<dbReference type="CDD" id="cd05009">
    <property type="entry name" value="SIS_GlmS_GlmD_2"/>
    <property type="match status" value="1"/>
</dbReference>
<dbReference type="FunFam" id="3.40.50.10490:FF:000001">
    <property type="entry name" value="Glutamine--fructose-6-phosphate aminotransferase [isomerizing]"/>
    <property type="match status" value="1"/>
</dbReference>
<dbReference type="FunFam" id="3.60.20.10:FF:000006">
    <property type="entry name" value="Glutamine--fructose-6-phosphate aminotransferase [isomerizing]"/>
    <property type="match status" value="1"/>
</dbReference>
<dbReference type="Gene3D" id="3.40.50.10490">
    <property type="entry name" value="Glucose-6-phosphate isomerase like protein, domain 1"/>
    <property type="match status" value="2"/>
</dbReference>
<dbReference type="Gene3D" id="3.60.20.10">
    <property type="entry name" value="Glutamine Phosphoribosylpyrophosphate, subunit 1, domain 1"/>
    <property type="match status" value="1"/>
</dbReference>
<dbReference type="HAMAP" id="MF_00164">
    <property type="entry name" value="GlmS"/>
    <property type="match status" value="1"/>
</dbReference>
<dbReference type="InterPro" id="IPR017932">
    <property type="entry name" value="GATase_2_dom"/>
</dbReference>
<dbReference type="InterPro" id="IPR005855">
    <property type="entry name" value="GFAT"/>
</dbReference>
<dbReference type="InterPro" id="IPR047084">
    <property type="entry name" value="GFAT_N"/>
</dbReference>
<dbReference type="InterPro" id="IPR035466">
    <property type="entry name" value="GlmS/AgaS_SIS"/>
</dbReference>
<dbReference type="InterPro" id="IPR035490">
    <property type="entry name" value="GlmS/FrlB_SIS"/>
</dbReference>
<dbReference type="InterPro" id="IPR029055">
    <property type="entry name" value="Ntn_hydrolases_N"/>
</dbReference>
<dbReference type="InterPro" id="IPR001347">
    <property type="entry name" value="SIS_dom"/>
</dbReference>
<dbReference type="InterPro" id="IPR046348">
    <property type="entry name" value="SIS_dom_sf"/>
</dbReference>
<dbReference type="NCBIfam" id="TIGR01135">
    <property type="entry name" value="glmS"/>
    <property type="match status" value="1"/>
</dbReference>
<dbReference type="NCBIfam" id="NF001484">
    <property type="entry name" value="PRK00331.1"/>
    <property type="match status" value="1"/>
</dbReference>
<dbReference type="PANTHER" id="PTHR10937">
    <property type="entry name" value="GLUCOSAMINE--FRUCTOSE-6-PHOSPHATE AMINOTRANSFERASE, ISOMERIZING"/>
    <property type="match status" value="1"/>
</dbReference>
<dbReference type="PANTHER" id="PTHR10937:SF0">
    <property type="entry name" value="GLUTAMINE--FRUCTOSE-6-PHOSPHATE TRANSAMINASE (ISOMERIZING)"/>
    <property type="match status" value="1"/>
</dbReference>
<dbReference type="Pfam" id="PF13522">
    <property type="entry name" value="GATase_6"/>
    <property type="match status" value="1"/>
</dbReference>
<dbReference type="Pfam" id="PF01380">
    <property type="entry name" value="SIS"/>
    <property type="match status" value="2"/>
</dbReference>
<dbReference type="SUPFAM" id="SSF56235">
    <property type="entry name" value="N-terminal nucleophile aminohydrolases (Ntn hydrolases)"/>
    <property type="match status" value="1"/>
</dbReference>
<dbReference type="SUPFAM" id="SSF53697">
    <property type="entry name" value="SIS domain"/>
    <property type="match status" value="1"/>
</dbReference>
<dbReference type="PROSITE" id="PS51278">
    <property type="entry name" value="GATASE_TYPE_2"/>
    <property type="match status" value="1"/>
</dbReference>
<dbReference type="PROSITE" id="PS51464">
    <property type="entry name" value="SIS"/>
    <property type="match status" value="2"/>
</dbReference>
<sequence length="609" mass="67025">MCGIFGYIGAKLAVPVVLDGLAKLEYRGYDSAGLAAVIPERLFVRKTVGRVDELRSSLEKENVPSSLAIGHTRWATHGVPTVKNAHPHVDENSACAIVHNGIIDNFKELRSLLISEGISFSSDTDSEVIAQLFAFRYQATGDLVHSFSWTLSQLQGSFSCGLIHKDHPNVLLCAAQESPLIIGLGEKESFIASDARAFLKHTKSIQALASGELAVVGLGSEVETYNFALKRIHKEVRQVVYTDADSDKQGYSYYMLKEIYEQPEVLERLIHKYLDQQGCISEKFLNGFSIEDFDEISIVACGSSYHAGFLAKYIIESLVSIPVHVEVASEFRYRQAYIGKKTLAILISQSGETADTLAALKEFRRRQVACVLGICNVEESALATGVDHCLFLEAGIEIGVASTKAFTAQLLLLILLGLKLATLKQTLSLEEHRACGKGLFELPELCNRLLANENLHSWANDYCDEDRFIFLGRRLMYPICMEAALKLKEIAYVEANCYPAGEMKHGPIALISQGSPVITFCGDPVVYEKMVGCIMEVKARQAHVIAVASESQEDIAAVSDAQIYVPNSHPLVSPILYTIVGQIMAYTMALKKGYEIDRPRNLAKSVTVE</sequence>
<reference key="1">
    <citation type="journal article" date="2003" name="Nucleic Acids Res.">
        <title>Genome sequence of Chlamydophila caviae (Chlamydia psittaci GPIC): examining the role of niche-specific genes in the evolution of the Chlamydiaceae.</title>
        <authorList>
            <person name="Read T.D."/>
            <person name="Myers G.S.A."/>
            <person name="Brunham R.C."/>
            <person name="Nelson W.C."/>
            <person name="Paulsen I.T."/>
            <person name="Heidelberg J.F."/>
            <person name="Holtzapple E.K."/>
            <person name="Khouri H.M."/>
            <person name="Federova N.B."/>
            <person name="Carty H.A."/>
            <person name="Umayam L.A."/>
            <person name="Haft D.H."/>
            <person name="Peterson J.D."/>
            <person name="Beanan M.J."/>
            <person name="White O."/>
            <person name="Salzberg S.L."/>
            <person name="Hsia R.-C."/>
            <person name="McClarty G."/>
            <person name="Rank R.G."/>
            <person name="Bavoil P.M."/>
            <person name="Fraser C.M."/>
        </authorList>
    </citation>
    <scope>NUCLEOTIDE SEQUENCE [LARGE SCALE GENOMIC DNA]</scope>
    <source>
        <strain>ATCC VR-813 / DSM 19441 / 03DC25 / GPIC</strain>
    </source>
</reference>
<feature type="initiator methionine" description="Removed" evidence="1">
    <location>
        <position position="1"/>
    </location>
</feature>
<feature type="chain" id="PRO_0000135317" description="Glutamine--fructose-6-phosphate aminotransferase [isomerizing]">
    <location>
        <begin position="2"/>
        <end position="609"/>
    </location>
</feature>
<feature type="domain" description="Glutamine amidotransferase type-2" evidence="1">
    <location>
        <begin position="2"/>
        <end position="219"/>
    </location>
</feature>
<feature type="domain" description="SIS 1" evidence="1">
    <location>
        <begin position="280"/>
        <end position="426"/>
    </location>
</feature>
<feature type="domain" description="SIS 2" evidence="1">
    <location>
        <begin position="458"/>
        <end position="599"/>
    </location>
</feature>
<feature type="active site" description="Nucleophile; for GATase activity" evidence="1">
    <location>
        <position position="2"/>
    </location>
</feature>
<feature type="active site" description="For Fru-6P isomerization activity" evidence="1">
    <location>
        <position position="604"/>
    </location>
</feature>
<comment type="function">
    <text evidence="1">Catalyzes the first step in hexosamine metabolism, converting fructose-6P into glucosamine-6P using glutamine as a nitrogen source.</text>
</comment>
<comment type="catalytic activity">
    <reaction evidence="1">
        <text>D-fructose 6-phosphate + L-glutamine = D-glucosamine 6-phosphate + L-glutamate</text>
        <dbReference type="Rhea" id="RHEA:13237"/>
        <dbReference type="ChEBI" id="CHEBI:29985"/>
        <dbReference type="ChEBI" id="CHEBI:58359"/>
        <dbReference type="ChEBI" id="CHEBI:58725"/>
        <dbReference type="ChEBI" id="CHEBI:61527"/>
        <dbReference type="EC" id="2.6.1.16"/>
    </reaction>
</comment>
<comment type="subunit">
    <text evidence="1">Homodimer.</text>
</comment>
<comment type="subcellular location">
    <subcellularLocation>
        <location evidence="1">Cytoplasm</location>
    </subcellularLocation>
</comment>
<name>GLMS_CHLCV</name>
<accession>Q821Z7</accession>